<evidence type="ECO:0000250" key="1"/>
<evidence type="ECO:0000250" key="2">
    <source>
        <dbReference type="UniProtKB" id="Q9P246"/>
    </source>
</evidence>
<evidence type="ECO:0000255" key="3"/>
<evidence type="ECO:0000255" key="4">
    <source>
        <dbReference type="PROSITE-ProRule" id="PRU00184"/>
    </source>
</evidence>
<evidence type="ECO:0000256" key="5">
    <source>
        <dbReference type="SAM" id="MobiDB-lite"/>
    </source>
</evidence>
<evidence type="ECO:0000305" key="6"/>
<evidence type="ECO:0007744" key="7">
    <source>
    </source>
</evidence>
<evidence type="ECO:0007744" key="8">
    <source>
    </source>
</evidence>
<gene>
    <name type="primary">Stim2</name>
    <name type="synonym">Kiaa1482</name>
</gene>
<reference key="1">
    <citation type="journal article" date="2004" name="DNA Res.">
        <title>Prediction of the coding sequences of mouse homologues of KIAA gene: IV. The complete nucleotide sequences of 500 mouse KIAA-homologous cDNAs identified by screening of terminal sequences of cDNA clones randomly sampled from size-fractionated libraries.</title>
        <authorList>
            <person name="Okazaki N."/>
            <person name="Kikuno R."/>
            <person name="Ohara R."/>
            <person name="Inamoto S."/>
            <person name="Koseki H."/>
            <person name="Hiraoka S."/>
            <person name="Saga Y."/>
            <person name="Seino S."/>
            <person name="Nishimura M."/>
            <person name="Kaisho T."/>
            <person name="Hoshino K."/>
            <person name="Kitamura H."/>
            <person name="Nagase T."/>
            <person name="Ohara O."/>
            <person name="Koga H."/>
        </authorList>
    </citation>
    <scope>NUCLEOTIDE SEQUENCE [LARGE SCALE MRNA]</scope>
    <source>
        <tissue>Pancreatic islet</tissue>
    </source>
</reference>
<reference key="2">
    <citation type="journal article" date="2001" name="Biochem. J.">
        <title>Identification and characterization of the STIM (stromal interaction molecule) gene family: coding for a novel class of transmembrane proteins.</title>
        <authorList>
            <person name="Williams R.T."/>
            <person name="Manji S.S.M."/>
            <person name="Parker N.J."/>
            <person name="Hancock M.S."/>
            <person name="van Stekelenburg L."/>
            <person name="Eid J.-P."/>
            <person name="Senior P.V."/>
            <person name="Kazenwadel J.S."/>
            <person name="Shandala T."/>
            <person name="Saint R."/>
            <person name="Smith P.J."/>
            <person name="Dziadek M.A."/>
        </authorList>
    </citation>
    <scope>NUCLEOTIDE SEQUENCE [MRNA] OF 82-227</scope>
    <source>
        <strain>C57BL/6J</strain>
        <tissue>Skeletal muscle</tissue>
    </source>
</reference>
<reference key="3">
    <citation type="journal article" date="2004" name="Genome Res.">
        <title>The status, quality, and expansion of the NIH full-length cDNA project: the Mammalian Gene Collection (MGC).</title>
        <authorList>
            <consortium name="The MGC Project Team"/>
        </authorList>
    </citation>
    <scope>NUCLEOTIDE SEQUENCE [LARGE SCALE MRNA] OF 374-746</scope>
    <source>
        <tissue>Mammary gland</tissue>
    </source>
</reference>
<reference key="4">
    <citation type="journal article" date="2007" name="Proc. Natl. Acad. Sci. U.S.A.">
        <title>Large-scale phosphorylation analysis of mouse liver.</title>
        <authorList>
            <person name="Villen J."/>
            <person name="Beausoleil S.A."/>
            <person name="Gerber S.A."/>
            <person name="Gygi S.P."/>
        </authorList>
    </citation>
    <scope>PHOSPHORYLATION [LARGE SCALE ANALYSIS] AT SER-523</scope>
    <scope>IDENTIFICATION BY MASS SPECTROMETRY [LARGE SCALE ANALYSIS]</scope>
    <source>
        <tissue>Liver</tissue>
    </source>
</reference>
<reference key="5">
    <citation type="journal article" date="2009" name="Immunity">
        <title>The phagosomal proteome in interferon-gamma-activated macrophages.</title>
        <authorList>
            <person name="Trost M."/>
            <person name="English L."/>
            <person name="Lemieux S."/>
            <person name="Courcelles M."/>
            <person name="Desjardins M."/>
            <person name="Thibault P."/>
        </authorList>
    </citation>
    <scope>IDENTIFICATION BY MASS SPECTROMETRY [LARGE SCALE ANALYSIS]</scope>
</reference>
<reference key="6">
    <citation type="journal article" date="2010" name="Cell">
        <title>A tissue-specific atlas of mouse protein phosphorylation and expression.</title>
        <authorList>
            <person name="Huttlin E.L."/>
            <person name="Jedrychowski M.P."/>
            <person name="Elias J.E."/>
            <person name="Goswami T."/>
            <person name="Rad R."/>
            <person name="Beausoleil S.A."/>
            <person name="Villen J."/>
            <person name="Haas W."/>
            <person name="Sowa M.E."/>
            <person name="Gygi S.P."/>
        </authorList>
    </citation>
    <scope>PHOSPHORYLATION [LARGE SCALE ANALYSIS] AT SER-28; SER-640 AND SER-650</scope>
    <scope>IDENTIFICATION BY MASS SPECTROMETRY [LARGE SCALE ANALYSIS]</scope>
    <source>
        <tissue>Brain</tissue>
        <tissue>Brown adipose tissue</tissue>
        <tissue>Kidney</tissue>
        <tissue>Liver</tissue>
        <tissue>Lung</tissue>
        <tissue>Pancreas</tissue>
        <tissue>Spleen</tissue>
        <tissue>Testis</tissue>
    </source>
</reference>
<feature type="signal peptide" evidence="3">
    <location>
        <begin position="1"/>
        <end position="14"/>
    </location>
</feature>
<feature type="chain" id="PRO_0000218282" description="Stromal interaction molecule 2">
    <location>
        <begin position="15"/>
        <end position="746"/>
    </location>
</feature>
<feature type="topological domain" description="Extracellular" evidence="3">
    <location>
        <begin position="15"/>
        <end position="218"/>
    </location>
</feature>
<feature type="transmembrane region" description="Helical" evidence="3">
    <location>
        <begin position="219"/>
        <end position="235"/>
    </location>
</feature>
<feature type="topological domain" description="Cytoplasmic" evidence="3">
    <location>
        <begin position="236"/>
        <end position="746"/>
    </location>
</feature>
<feature type="domain" description="EF-hand">
    <location>
        <begin position="67"/>
        <end position="102"/>
    </location>
</feature>
<feature type="domain" description="SAM" evidence="4">
    <location>
        <begin position="136"/>
        <end position="204"/>
    </location>
</feature>
<feature type="region of interest" description="Disordered" evidence="5">
    <location>
        <begin position="490"/>
        <end position="562"/>
    </location>
</feature>
<feature type="region of interest" description="Disordered" evidence="5">
    <location>
        <begin position="592"/>
        <end position="651"/>
    </location>
</feature>
<feature type="region of interest" description="Disordered" evidence="5">
    <location>
        <begin position="684"/>
        <end position="746"/>
    </location>
</feature>
<feature type="coiled-coil region" evidence="3">
    <location>
        <begin position="247"/>
        <end position="394"/>
    </location>
</feature>
<feature type="compositionally biased region" description="Low complexity" evidence="5">
    <location>
        <begin position="527"/>
        <end position="539"/>
    </location>
</feature>
<feature type="compositionally biased region" description="Basic residues" evidence="5">
    <location>
        <begin position="540"/>
        <end position="549"/>
    </location>
</feature>
<feature type="compositionally biased region" description="Basic and acidic residues" evidence="5">
    <location>
        <begin position="625"/>
        <end position="637"/>
    </location>
</feature>
<feature type="compositionally biased region" description="Basic and acidic residues" evidence="5">
    <location>
        <begin position="723"/>
        <end position="732"/>
    </location>
</feature>
<feature type="compositionally biased region" description="Basic residues" evidence="5">
    <location>
        <begin position="733"/>
        <end position="746"/>
    </location>
</feature>
<feature type="binding site" evidence="1">
    <location>
        <position position="80"/>
    </location>
    <ligand>
        <name>Ca(2+)</name>
        <dbReference type="ChEBI" id="CHEBI:29108"/>
    </ligand>
</feature>
<feature type="binding site" evidence="1">
    <location>
        <position position="82"/>
    </location>
    <ligand>
        <name>Ca(2+)</name>
        <dbReference type="ChEBI" id="CHEBI:29108"/>
    </ligand>
</feature>
<feature type="binding site" evidence="1">
    <location>
        <position position="84"/>
    </location>
    <ligand>
        <name>Ca(2+)</name>
        <dbReference type="ChEBI" id="CHEBI:29108"/>
    </ligand>
</feature>
<feature type="binding site" evidence="1">
    <location>
        <position position="91"/>
    </location>
    <ligand>
        <name>Ca(2+)</name>
        <dbReference type="ChEBI" id="CHEBI:29108"/>
    </ligand>
</feature>
<feature type="modified residue" description="Phosphoserine" evidence="8">
    <location>
        <position position="28"/>
    </location>
</feature>
<feature type="modified residue" description="Phosphoserine" evidence="7">
    <location>
        <position position="523"/>
    </location>
</feature>
<feature type="modified residue" description="Phosphoserine" evidence="2">
    <location>
        <position position="609"/>
    </location>
</feature>
<feature type="modified residue" description="Phosphoserine" evidence="2">
    <location>
        <position position="621"/>
    </location>
</feature>
<feature type="modified residue" description="Phosphoserine" evidence="8">
    <location>
        <position position="640"/>
    </location>
</feature>
<feature type="modified residue" description="Phosphoserine" evidence="8">
    <location>
        <position position="650"/>
    </location>
</feature>
<feature type="modified residue" description="Phosphoserine" evidence="2">
    <location>
        <position position="661"/>
    </location>
</feature>
<feature type="modified residue" description="Phosphoserine" evidence="2">
    <location>
        <position position="665"/>
    </location>
</feature>
<feature type="modified residue" description="Phosphoserine" evidence="2">
    <location>
        <position position="680"/>
    </location>
</feature>
<feature type="modified residue" description="Phosphoserine" evidence="2">
    <location>
        <position position="697"/>
    </location>
</feature>
<feature type="glycosylation site" description="N-linked (GlcNAc...) asparagine" evidence="3">
    <location>
        <position position="135"/>
    </location>
</feature>
<sequence>MLLFGLLVAGVADGCDLVPRHLRGRRASGSAGAAASPSAAAAGERQALLTDPCMSLSPPCFTEEDRFSLEALQTIHKQMDDDKDGGIEVDESDEFIREDMKYKDATNKHSHLHREDKHITVEDLWKQWKTSEVHNWTLEDTLQWLIEFVELPQYEKNFRDNNVKGTTLPRIAVHETSFMISQLKISDRSHRQKLQLKALDVVLFGPLTRPPHNWMKDFILTISIVIGVGGCWFAYTQNKTSKEHVAKMMKDLESLQTAEQSLMDLQERLEKAQEENRTVAVEKQNLERKMMDEINYAKEEACRLRELREGAECELSRRQYAEQELEQVRMALKKAEKEFELRSSWSVPDALQKWLQLTHEVEVQYYNIKRQNAEMQLAIAKDEAEKIKKKRSTVFGTLHVAHSSSLDEVDHKILEAKKALSELTTCLRERLFRWQQIEKICGFQIAHNSGLPSLTSSLYSDHSWVVMPRVSIPPYPIAGGVDDLDEDTPPIVPQFPGTVAKPAGSLARSSSLCRSRRSIVPSSPQSQRAQLPAHAPLAAHPRHPHHPQHPQHSLPSPDPDILSVSSCPALYRNEEEEEAIYFTAEKQWEVPDTASECDSLNSSSGRKPSPPSSLEMYQTLSSRKISRDELSLEDSSRGESPVTADVSRGSPECVGLTETKSMIFSPASRVYNGILEKSCSMHQLSSGIPVPHPRHTSCSSAGNDSKPVQEASNVSRVSSIPHDLCHNGEKSKKPSKIKSLFKKKSK</sequence>
<comment type="function">
    <text evidence="1">Plays a role in mediating store-operated Ca(2+) entry (SOCE), a Ca(2+) influx following depletion of intracellular Ca(2+) stores. Functions as a highly sensitive Ca(2+) sensor in the endoplasmic reticulum which activates both store-operated and store-independent Ca(2+)-influx. Regulates basal cytosolic and endoplasmic reticulum Ca(2+) concentrations. Upon mild variations of the endoplasmic reticulum Ca(2+) concentration, translocates from the endoplasmic reticulum to the plasma membrane where it probably activates the Ca(2+) release-activated Ca(2+) (CRAC) channels ORAI1, ORAI2 and ORAI3. May inhibit STIM1-mediated Ca(2+) influx (By similarity).</text>
</comment>
<comment type="subunit">
    <text evidence="1">Oligomer with STIM1. Interacts with ORAI1 (By similarity).</text>
</comment>
<comment type="subcellular location">
    <subcellularLocation>
        <location evidence="1">Endoplasmic reticulum membrane</location>
        <topology evidence="1">Single-pass type I membrane protein</topology>
    </subcellularLocation>
    <text evidence="1">Dynamically translocates from a uniform endoplasmic reticulum distribution to punctual endoplasmic reticulum-plasma membrane junctions in response to decrease in endoplasmic reticulum Ca(2+) concentration.</text>
</comment>
<comment type="PTM">
    <text evidence="1">Glycosylated.</text>
</comment>
<comment type="PTM">
    <text evidence="1">Phosphorylated predominantly on Ser residues.</text>
</comment>
<comment type="sequence caution" evidence="6">
    <conflict type="erroneous initiation">
        <sequence resource="EMBL-CDS" id="BAD32461"/>
    </conflict>
</comment>
<organism>
    <name type="scientific">Mus musculus</name>
    <name type="common">Mouse</name>
    <dbReference type="NCBI Taxonomy" id="10090"/>
    <lineage>
        <taxon>Eukaryota</taxon>
        <taxon>Metazoa</taxon>
        <taxon>Chordata</taxon>
        <taxon>Craniata</taxon>
        <taxon>Vertebrata</taxon>
        <taxon>Euteleostomi</taxon>
        <taxon>Mammalia</taxon>
        <taxon>Eutheria</taxon>
        <taxon>Euarchontoglires</taxon>
        <taxon>Glires</taxon>
        <taxon>Rodentia</taxon>
        <taxon>Myomorpha</taxon>
        <taxon>Muroidea</taxon>
        <taxon>Muridae</taxon>
        <taxon>Murinae</taxon>
        <taxon>Mus</taxon>
        <taxon>Mus</taxon>
    </lineage>
</organism>
<protein>
    <recommendedName>
        <fullName>Stromal interaction molecule 2</fullName>
    </recommendedName>
</protein>
<proteinExistence type="evidence at protein level"/>
<name>STIM2_MOUSE</name>
<accession>P83093</accession>
<accession>Q69ZI3</accession>
<accession>Q80VF4</accession>
<keyword id="KW-0106">Calcium</keyword>
<keyword id="KW-0109">Calcium transport</keyword>
<keyword id="KW-0175">Coiled coil</keyword>
<keyword id="KW-0256">Endoplasmic reticulum</keyword>
<keyword id="KW-0325">Glycoprotein</keyword>
<keyword id="KW-0406">Ion transport</keyword>
<keyword id="KW-0472">Membrane</keyword>
<keyword id="KW-0479">Metal-binding</keyword>
<keyword id="KW-0597">Phosphoprotein</keyword>
<keyword id="KW-1185">Reference proteome</keyword>
<keyword id="KW-0732">Signal</keyword>
<keyword id="KW-0812">Transmembrane</keyword>
<keyword id="KW-1133">Transmembrane helix</keyword>
<keyword id="KW-0813">Transport</keyword>
<dbReference type="EMBL" id="AK173183">
    <property type="protein sequence ID" value="BAD32461.1"/>
    <property type="status" value="ALT_INIT"/>
    <property type="molecule type" value="mRNA"/>
</dbReference>
<dbReference type="EMBL" id="AF328907">
    <property type="protein sequence ID" value="AAK82339.1"/>
    <property type="molecule type" value="mRNA"/>
</dbReference>
<dbReference type="EMBL" id="BC043455">
    <property type="protein sequence ID" value="AAH43455.1"/>
    <property type="molecule type" value="mRNA"/>
</dbReference>
<dbReference type="CCDS" id="CCDS39089.2"/>
<dbReference type="RefSeq" id="NP_001074572.2">
    <property type="nucleotide sequence ID" value="NM_001081103.3"/>
</dbReference>
<dbReference type="BMRB" id="P83093"/>
<dbReference type="SMR" id="P83093"/>
<dbReference type="BioGRID" id="228048">
    <property type="interactions" value="8"/>
</dbReference>
<dbReference type="FunCoup" id="P83093">
    <property type="interactions" value="3943"/>
</dbReference>
<dbReference type="STRING" id="10090.ENSMUSP00000113174"/>
<dbReference type="ChEMBL" id="CHEMBL4296085"/>
<dbReference type="GlyCosmos" id="P83093">
    <property type="glycosylation" value="1 site, No reported glycans"/>
</dbReference>
<dbReference type="GlyGen" id="P83093">
    <property type="glycosylation" value="3 sites, 1 N-linked glycan (1 site), 1 O-linked glycan (1 site)"/>
</dbReference>
<dbReference type="iPTMnet" id="P83093"/>
<dbReference type="PhosphoSitePlus" id="P83093"/>
<dbReference type="SwissPalm" id="P83093"/>
<dbReference type="jPOST" id="P83093"/>
<dbReference type="PaxDb" id="10090-ENSMUSP00000113174"/>
<dbReference type="ProteomicsDB" id="257491"/>
<dbReference type="Pumba" id="P83093"/>
<dbReference type="Antibodypedia" id="10303">
    <property type="antibodies" value="285 antibodies from 37 providers"/>
</dbReference>
<dbReference type="DNASU" id="116873"/>
<dbReference type="Ensembl" id="ENSMUST00000117661.9">
    <property type="protein sequence ID" value="ENSMUSP00000113174.3"/>
    <property type="gene ID" value="ENSMUSG00000039156.20"/>
</dbReference>
<dbReference type="GeneID" id="116873"/>
<dbReference type="KEGG" id="mmu:116873"/>
<dbReference type="UCSC" id="uc008xlq.2">
    <property type="organism name" value="mouse"/>
</dbReference>
<dbReference type="AGR" id="MGI:2151156"/>
<dbReference type="CTD" id="57620"/>
<dbReference type="MGI" id="MGI:2151156">
    <property type="gene designation" value="Stim2"/>
</dbReference>
<dbReference type="VEuPathDB" id="HostDB:ENSMUSG00000039156"/>
<dbReference type="eggNOG" id="KOG4403">
    <property type="taxonomic scope" value="Eukaryota"/>
</dbReference>
<dbReference type="GeneTree" id="ENSGT00390000000214"/>
<dbReference type="HOGENOM" id="CLU_010588_2_0_1"/>
<dbReference type="InParanoid" id="P83093"/>
<dbReference type="OMA" id="CQNGERN"/>
<dbReference type="PhylomeDB" id="P83093"/>
<dbReference type="TreeFam" id="TF313487"/>
<dbReference type="BioGRID-ORCS" id="116873">
    <property type="hits" value="3 hits in 76 CRISPR screens"/>
</dbReference>
<dbReference type="ChiTaRS" id="Stim2">
    <property type="organism name" value="mouse"/>
</dbReference>
<dbReference type="PRO" id="PR:P83093"/>
<dbReference type="Proteomes" id="UP000000589">
    <property type="component" value="Chromosome 5"/>
</dbReference>
<dbReference type="RNAct" id="P83093">
    <property type="molecule type" value="protein"/>
</dbReference>
<dbReference type="Bgee" id="ENSMUSG00000039156">
    <property type="expression patterns" value="Expressed in vestibular membrane of cochlear duct and 227 other cell types or tissues"/>
</dbReference>
<dbReference type="ExpressionAtlas" id="P83093">
    <property type="expression patterns" value="baseline and differential"/>
</dbReference>
<dbReference type="GO" id="GO:0005783">
    <property type="term" value="C:endoplasmic reticulum"/>
    <property type="evidence" value="ECO:0000250"/>
    <property type="project" value="UniProtKB"/>
</dbReference>
<dbReference type="GO" id="GO:0005789">
    <property type="term" value="C:endoplasmic reticulum membrane"/>
    <property type="evidence" value="ECO:0007669"/>
    <property type="project" value="UniProtKB-SubCell"/>
</dbReference>
<dbReference type="GO" id="GO:0016020">
    <property type="term" value="C:membrane"/>
    <property type="evidence" value="ECO:0000247"/>
    <property type="project" value="MGI"/>
</dbReference>
<dbReference type="GO" id="GO:0005886">
    <property type="term" value="C:plasma membrane"/>
    <property type="evidence" value="ECO:0000250"/>
    <property type="project" value="UniProtKB"/>
</dbReference>
<dbReference type="GO" id="GO:0005246">
    <property type="term" value="F:calcium channel regulator activity"/>
    <property type="evidence" value="ECO:0000250"/>
    <property type="project" value="UniProtKB"/>
</dbReference>
<dbReference type="GO" id="GO:0005509">
    <property type="term" value="F:calcium ion binding"/>
    <property type="evidence" value="ECO:0000250"/>
    <property type="project" value="UniProtKB"/>
</dbReference>
<dbReference type="GO" id="GO:0015279">
    <property type="term" value="F:store-operated calcium channel activity"/>
    <property type="evidence" value="ECO:0000250"/>
    <property type="project" value="UniProtKB"/>
</dbReference>
<dbReference type="GO" id="GO:0032237">
    <property type="term" value="P:activation of store-operated calcium channel activity"/>
    <property type="evidence" value="ECO:0000250"/>
    <property type="project" value="UniProtKB"/>
</dbReference>
<dbReference type="GO" id="GO:0006874">
    <property type="term" value="P:intracellular calcium ion homeostasis"/>
    <property type="evidence" value="ECO:0000250"/>
    <property type="project" value="UniProtKB"/>
</dbReference>
<dbReference type="GO" id="GO:0051928">
    <property type="term" value="P:positive regulation of calcium ion transport"/>
    <property type="evidence" value="ECO:0000250"/>
    <property type="project" value="UniProtKB"/>
</dbReference>
<dbReference type="CDD" id="cd09574">
    <property type="entry name" value="SAM_STIM2"/>
    <property type="match status" value="1"/>
</dbReference>
<dbReference type="CDD" id="cd11722">
    <property type="entry name" value="SOAR"/>
    <property type="match status" value="1"/>
</dbReference>
<dbReference type="FunFam" id="1.10.150.50:FF:000009">
    <property type="entry name" value="Stromal interaction molecule 1"/>
    <property type="match status" value="1"/>
</dbReference>
<dbReference type="FunFam" id="1.10.238.180:FF:000001">
    <property type="entry name" value="Stromal interaction molecule 1"/>
    <property type="match status" value="1"/>
</dbReference>
<dbReference type="FunFam" id="1.10.287.3550:FF:000001">
    <property type="entry name" value="Stromal interaction molecule 1"/>
    <property type="match status" value="1"/>
</dbReference>
<dbReference type="FunFam" id="1.20.5.340:FF:000011">
    <property type="entry name" value="Stromal interaction molecule 1"/>
    <property type="match status" value="1"/>
</dbReference>
<dbReference type="Gene3D" id="1.10.238.180">
    <property type="match status" value="1"/>
</dbReference>
<dbReference type="Gene3D" id="1.10.287.3550">
    <property type="match status" value="1"/>
</dbReference>
<dbReference type="Gene3D" id="1.20.5.340">
    <property type="match status" value="1"/>
</dbReference>
<dbReference type="Gene3D" id="1.10.150.50">
    <property type="entry name" value="Transcription Factor, Ets-1"/>
    <property type="match status" value="1"/>
</dbReference>
<dbReference type="InterPro" id="IPR001660">
    <property type="entry name" value="SAM"/>
</dbReference>
<dbReference type="InterPro" id="IPR013761">
    <property type="entry name" value="SAM/pointed_sf"/>
</dbReference>
<dbReference type="InterPro" id="IPR032393">
    <property type="entry name" value="SOAR"/>
</dbReference>
<dbReference type="InterPro" id="IPR037608">
    <property type="entry name" value="STIM"/>
</dbReference>
<dbReference type="InterPro" id="IPR037610">
    <property type="entry name" value="STIM2_SAM"/>
</dbReference>
<dbReference type="PANTHER" id="PTHR15136:SF2">
    <property type="entry name" value="STROMAL INTERACTION MOLECULE 2"/>
    <property type="match status" value="1"/>
</dbReference>
<dbReference type="PANTHER" id="PTHR15136">
    <property type="entry name" value="STROMAL INTERACTION MOLECULE HOMOLOG"/>
    <property type="match status" value="1"/>
</dbReference>
<dbReference type="Pfam" id="PF07647">
    <property type="entry name" value="SAM_2"/>
    <property type="match status" value="1"/>
</dbReference>
<dbReference type="Pfam" id="PF16533">
    <property type="entry name" value="SOAR"/>
    <property type="match status" value="1"/>
</dbReference>
<dbReference type="SMART" id="SM00454">
    <property type="entry name" value="SAM"/>
    <property type="match status" value="1"/>
</dbReference>
<dbReference type="SUPFAM" id="SSF47769">
    <property type="entry name" value="SAM/Pointed domain"/>
    <property type="match status" value="1"/>
</dbReference>
<dbReference type="PROSITE" id="PS50105">
    <property type="entry name" value="SAM_DOMAIN"/>
    <property type="match status" value="1"/>
</dbReference>